<protein>
    <recommendedName>
        <fullName>Putative xyloglucan endotransglucosylase/hydrolase protein 13</fullName>
        <shortName>At-XTH13</shortName>
        <shortName>XTH-13</shortName>
        <ecNumber>2.4.1.207</ecNumber>
    </recommendedName>
</protein>
<sequence length="284" mass="32175">MAAFTTKQSLLLLSLLLLISLSAGSFYDNFDITWGNGRANIVESGQLLTCTLDKISGSGFQSKKEYLFGKIDMKMKLVAGNSAGTVTAYYLSSKGETWDEIDFEFLGNVTGQPYVLHTNVFTGGKGNREMQFYLWFDPTADFHTYTVLWNPLNIIFLVDGIPIRVFKNNEANGVAYPKSQPMKIYSSLWEADDWATQGGKVKTDWTNAPFSASYKSFNDVDCCSRTSLLNWVTCNANSNSWMWTTLNSNQYGQMKWVQDDYMIYNYCTDFKRFPQGLPTECNLN</sequence>
<accession>Q9FKL8</accession>
<evidence type="ECO:0000250" key="1"/>
<evidence type="ECO:0000250" key="2">
    <source>
        <dbReference type="UniProtKB" id="Q8GZD5"/>
    </source>
</evidence>
<evidence type="ECO:0000255" key="3"/>
<evidence type="ECO:0000255" key="4">
    <source>
        <dbReference type="PROSITE-ProRule" id="PRU01098"/>
    </source>
</evidence>
<evidence type="ECO:0000255" key="5">
    <source>
        <dbReference type="PROSITE-ProRule" id="PRU10064"/>
    </source>
</evidence>
<evidence type="ECO:0000305" key="6"/>
<proteinExistence type="inferred from homology"/>
<gene>
    <name type="primary">XTH13</name>
    <name type="ordered locus">At5g57540</name>
    <name type="ORF">MUA2.11</name>
</gene>
<comment type="function">
    <text evidence="1">May catalyze xyloglucan endohydrolysis (XEH) and/or endotransglycosylation (XET). Cleaves and religates xyloglucan polymers, an essential constituent of the primary cell wall, and thereby participates in cell wall construction of growing tissues (By similarity).</text>
</comment>
<comment type="catalytic activity">
    <reaction>
        <text>breaks a beta-(1-&gt;4) bond in the backbone of a xyloglucan and transfers the xyloglucanyl segment on to O-4 of the non-reducing terminal glucose residue of an acceptor, which can be a xyloglucan or an oligosaccharide of xyloglucan.</text>
        <dbReference type="EC" id="2.4.1.207"/>
    </reaction>
</comment>
<comment type="subcellular location">
    <subcellularLocation>
        <location evidence="6">Secreted</location>
        <location evidence="6">Cell wall</location>
    </subcellularLocation>
    <subcellularLocation>
        <location evidence="6">Secreted</location>
        <location evidence="6">Extracellular space</location>
        <location evidence="6">Apoplast</location>
    </subcellularLocation>
</comment>
<comment type="PTM">
    <text evidence="1">Contains at least one intrachain disulfide bond essential for its enzymatic activity.</text>
</comment>
<comment type="similarity">
    <text evidence="6">Belongs to the glycosyl hydrolase 16 family. XTH group 2 subfamily.</text>
</comment>
<name>XTH13_ARATH</name>
<reference key="1">
    <citation type="journal article" date="1998" name="DNA Res.">
        <title>Structural analysis of Arabidopsis thaliana chromosome 5. V. Sequence features of the regions of 1,381,565 bp covered by twenty one physically assigned P1 and TAC clones.</title>
        <authorList>
            <person name="Kaneko T."/>
            <person name="Kotani H."/>
            <person name="Nakamura Y."/>
            <person name="Sato S."/>
            <person name="Asamizu E."/>
            <person name="Miyajima N."/>
            <person name="Tabata S."/>
        </authorList>
    </citation>
    <scope>NUCLEOTIDE SEQUENCE [LARGE SCALE GENOMIC DNA]</scope>
    <source>
        <strain>cv. Columbia</strain>
    </source>
</reference>
<reference key="2">
    <citation type="journal article" date="2017" name="Plant J.">
        <title>Araport11: a complete reannotation of the Arabidopsis thaliana reference genome.</title>
        <authorList>
            <person name="Cheng C.Y."/>
            <person name="Krishnakumar V."/>
            <person name="Chan A.P."/>
            <person name="Thibaud-Nissen F."/>
            <person name="Schobel S."/>
            <person name="Town C.D."/>
        </authorList>
    </citation>
    <scope>GENOME REANNOTATION</scope>
    <source>
        <strain>cv. Columbia</strain>
    </source>
</reference>
<reference key="3">
    <citation type="journal article" date="2002" name="Plant Cell Physiol.">
        <title>The XTH family of enzymes involved in xyloglucan endotransglucosylation and endohydrolysis: current perspectives and a new unifying nomenclature.</title>
        <authorList>
            <person name="Rose J.K.C."/>
            <person name="Braam J."/>
            <person name="Fry S.C."/>
            <person name="Nishitani K."/>
        </authorList>
    </citation>
    <scope>NOMENCLATURE</scope>
</reference>
<dbReference type="EC" id="2.4.1.207"/>
<dbReference type="EMBL" id="AB011482">
    <property type="protein sequence ID" value="BAB08789.1"/>
    <property type="molecule type" value="Genomic_DNA"/>
</dbReference>
<dbReference type="EMBL" id="CP002688">
    <property type="protein sequence ID" value="AED96913.1"/>
    <property type="molecule type" value="Genomic_DNA"/>
</dbReference>
<dbReference type="RefSeq" id="NP_200562.1">
    <property type="nucleotide sequence ID" value="NM_125135.2"/>
</dbReference>
<dbReference type="SMR" id="Q9FKL8"/>
<dbReference type="FunCoup" id="Q9FKL8">
    <property type="interactions" value="39"/>
</dbReference>
<dbReference type="STRING" id="3702.Q9FKL8"/>
<dbReference type="CAZy" id="GH16">
    <property type="family name" value="Glycoside Hydrolase Family 16"/>
</dbReference>
<dbReference type="GlyCosmos" id="Q9FKL8">
    <property type="glycosylation" value="1 site, No reported glycans"/>
</dbReference>
<dbReference type="GlyGen" id="Q9FKL8">
    <property type="glycosylation" value="1 site"/>
</dbReference>
<dbReference type="PaxDb" id="3702-AT5G57540.1"/>
<dbReference type="ProteomicsDB" id="242558"/>
<dbReference type="EnsemblPlants" id="AT5G57540.1">
    <property type="protein sequence ID" value="AT5G57540.1"/>
    <property type="gene ID" value="AT5G57540"/>
</dbReference>
<dbReference type="GeneID" id="835858"/>
<dbReference type="Gramene" id="AT5G57540.1">
    <property type="protein sequence ID" value="AT5G57540.1"/>
    <property type="gene ID" value="AT5G57540"/>
</dbReference>
<dbReference type="KEGG" id="ath:AT5G57540"/>
<dbReference type="Araport" id="AT5G57540"/>
<dbReference type="TAIR" id="AT5G57540">
    <property type="gene designation" value="XTH13"/>
</dbReference>
<dbReference type="eggNOG" id="ENOG502QQ71">
    <property type="taxonomic scope" value="Eukaryota"/>
</dbReference>
<dbReference type="HOGENOM" id="CLU_048041_0_0_1"/>
<dbReference type="InParanoid" id="Q9FKL8"/>
<dbReference type="OMA" id="ECAFANI"/>
<dbReference type="OrthoDB" id="4781at2759"/>
<dbReference type="PhylomeDB" id="Q9FKL8"/>
<dbReference type="BioCyc" id="ARA:AT5G57540-MONOMER"/>
<dbReference type="BRENDA" id="2.4.1.207">
    <property type="organism ID" value="399"/>
</dbReference>
<dbReference type="PRO" id="PR:Q9FKL8"/>
<dbReference type="Proteomes" id="UP000006548">
    <property type="component" value="Chromosome 5"/>
</dbReference>
<dbReference type="ExpressionAtlas" id="Q9FKL8">
    <property type="expression patterns" value="baseline and differential"/>
</dbReference>
<dbReference type="GO" id="GO:0048046">
    <property type="term" value="C:apoplast"/>
    <property type="evidence" value="ECO:0007669"/>
    <property type="project" value="UniProtKB-SubCell"/>
</dbReference>
<dbReference type="GO" id="GO:0004553">
    <property type="term" value="F:hydrolase activity, hydrolyzing O-glycosyl compounds"/>
    <property type="evidence" value="ECO:0007669"/>
    <property type="project" value="InterPro"/>
</dbReference>
<dbReference type="GO" id="GO:0030247">
    <property type="term" value="F:polysaccharide binding"/>
    <property type="evidence" value="ECO:0000250"/>
    <property type="project" value="UniProtKB"/>
</dbReference>
<dbReference type="GO" id="GO:0016762">
    <property type="term" value="F:xyloglucan:xyloglucosyl transferase activity"/>
    <property type="evidence" value="ECO:0000314"/>
    <property type="project" value="TAIR"/>
</dbReference>
<dbReference type="GO" id="GO:0042546">
    <property type="term" value="P:cell wall biogenesis"/>
    <property type="evidence" value="ECO:0007669"/>
    <property type="project" value="InterPro"/>
</dbReference>
<dbReference type="GO" id="GO:0071555">
    <property type="term" value="P:cell wall organization"/>
    <property type="evidence" value="ECO:0007669"/>
    <property type="project" value="UniProtKB-KW"/>
</dbReference>
<dbReference type="GO" id="GO:0010411">
    <property type="term" value="P:xyloglucan metabolic process"/>
    <property type="evidence" value="ECO:0000314"/>
    <property type="project" value="TAIR"/>
</dbReference>
<dbReference type="CDD" id="cd02176">
    <property type="entry name" value="GH16_XET"/>
    <property type="match status" value="1"/>
</dbReference>
<dbReference type="FunFam" id="2.60.120.200:FF:000025">
    <property type="entry name" value="Xyloglucan endotransglucosylase/hydrolase"/>
    <property type="match status" value="1"/>
</dbReference>
<dbReference type="Gene3D" id="2.60.120.200">
    <property type="match status" value="1"/>
</dbReference>
<dbReference type="InterPro" id="IPR044791">
    <property type="entry name" value="Beta-glucanase/XTH"/>
</dbReference>
<dbReference type="InterPro" id="IPR008264">
    <property type="entry name" value="Beta_glucanase"/>
</dbReference>
<dbReference type="InterPro" id="IPR013320">
    <property type="entry name" value="ConA-like_dom_sf"/>
</dbReference>
<dbReference type="InterPro" id="IPR000757">
    <property type="entry name" value="GH16"/>
</dbReference>
<dbReference type="InterPro" id="IPR008263">
    <property type="entry name" value="GH16_AS"/>
</dbReference>
<dbReference type="InterPro" id="IPR010713">
    <property type="entry name" value="XET_C"/>
</dbReference>
<dbReference type="InterPro" id="IPR016455">
    <property type="entry name" value="XTH"/>
</dbReference>
<dbReference type="PANTHER" id="PTHR31062">
    <property type="entry name" value="XYLOGLUCAN ENDOTRANSGLUCOSYLASE/HYDROLASE PROTEIN 8-RELATED"/>
    <property type="match status" value="1"/>
</dbReference>
<dbReference type="Pfam" id="PF00722">
    <property type="entry name" value="Glyco_hydro_16"/>
    <property type="match status" value="1"/>
</dbReference>
<dbReference type="Pfam" id="PF06955">
    <property type="entry name" value="XET_C"/>
    <property type="match status" value="1"/>
</dbReference>
<dbReference type="PIRSF" id="PIRSF005604">
    <property type="entry name" value="XET"/>
    <property type="match status" value="1"/>
</dbReference>
<dbReference type="PRINTS" id="PR00737">
    <property type="entry name" value="GLHYDRLASE16"/>
</dbReference>
<dbReference type="SUPFAM" id="SSF49899">
    <property type="entry name" value="Concanavalin A-like lectins/glucanases"/>
    <property type="match status" value="1"/>
</dbReference>
<dbReference type="PROSITE" id="PS01034">
    <property type="entry name" value="GH16_1"/>
    <property type="match status" value="1"/>
</dbReference>
<dbReference type="PROSITE" id="PS51762">
    <property type="entry name" value="GH16_2"/>
    <property type="match status" value="1"/>
</dbReference>
<organism>
    <name type="scientific">Arabidopsis thaliana</name>
    <name type="common">Mouse-ear cress</name>
    <dbReference type="NCBI Taxonomy" id="3702"/>
    <lineage>
        <taxon>Eukaryota</taxon>
        <taxon>Viridiplantae</taxon>
        <taxon>Streptophyta</taxon>
        <taxon>Embryophyta</taxon>
        <taxon>Tracheophyta</taxon>
        <taxon>Spermatophyta</taxon>
        <taxon>Magnoliopsida</taxon>
        <taxon>eudicotyledons</taxon>
        <taxon>Gunneridae</taxon>
        <taxon>Pentapetalae</taxon>
        <taxon>rosids</taxon>
        <taxon>malvids</taxon>
        <taxon>Brassicales</taxon>
        <taxon>Brassicaceae</taxon>
        <taxon>Camelineae</taxon>
        <taxon>Arabidopsis</taxon>
    </lineage>
</organism>
<feature type="signal peptide" evidence="3">
    <location>
        <begin position="1"/>
        <end position="24"/>
    </location>
</feature>
<feature type="chain" id="PRO_0000011813" description="Putative xyloglucan endotransglucosylase/hydrolase protein 13">
    <location>
        <begin position="25"/>
        <end position="284"/>
    </location>
</feature>
<feature type="domain" description="GH16" evidence="4">
    <location>
        <begin position="25"/>
        <end position="214"/>
    </location>
</feature>
<feature type="active site" description="Nucleophile" evidence="5">
    <location>
        <position position="100"/>
    </location>
</feature>
<feature type="active site" description="Proton donor" evidence="5">
    <location>
        <position position="104"/>
    </location>
</feature>
<feature type="binding site" evidence="2">
    <location>
        <position position="104"/>
    </location>
    <ligand>
        <name>xyloglucan</name>
        <dbReference type="ChEBI" id="CHEBI:18233"/>
    </ligand>
</feature>
<feature type="binding site" evidence="2">
    <location>
        <begin position="117"/>
        <end position="119"/>
    </location>
    <ligand>
        <name>xyloglucan</name>
        <dbReference type="ChEBI" id="CHEBI:18233"/>
    </ligand>
</feature>
<feature type="binding site" evidence="2">
    <location>
        <begin position="127"/>
        <end position="129"/>
    </location>
    <ligand>
        <name>xyloglucan</name>
        <dbReference type="ChEBI" id="CHEBI:18233"/>
    </ligand>
</feature>
<feature type="binding site" evidence="2">
    <location>
        <begin position="193"/>
        <end position="194"/>
    </location>
    <ligand>
        <name>xyloglucan</name>
        <dbReference type="ChEBI" id="CHEBI:18233"/>
    </ligand>
</feature>
<feature type="binding site" evidence="2">
    <location>
        <position position="198"/>
    </location>
    <ligand>
        <name>xyloglucan</name>
        <dbReference type="ChEBI" id="CHEBI:18233"/>
    </ligand>
</feature>
<feature type="binding site" evidence="2">
    <location>
        <position position="272"/>
    </location>
    <ligand>
        <name>xyloglucan</name>
        <dbReference type="ChEBI" id="CHEBI:18233"/>
    </ligand>
</feature>
<feature type="site" description="Important for catalytic activity" evidence="2">
    <location>
        <position position="102"/>
    </location>
</feature>
<feature type="glycosylation site" description="N-linked (GlcNAc...) asparagine" evidence="3">
    <location>
        <position position="108"/>
    </location>
</feature>
<feature type="disulfide bond" evidence="2">
    <location>
        <begin position="223"/>
        <end position="234"/>
    </location>
</feature>
<feature type="disulfide bond" evidence="2">
    <location>
        <begin position="267"/>
        <end position="281"/>
    </location>
</feature>
<keyword id="KW-0052">Apoplast</keyword>
<keyword id="KW-0134">Cell wall</keyword>
<keyword id="KW-0961">Cell wall biogenesis/degradation</keyword>
<keyword id="KW-1015">Disulfide bond</keyword>
<keyword id="KW-0325">Glycoprotein</keyword>
<keyword id="KW-0326">Glycosidase</keyword>
<keyword id="KW-0378">Hydrolase</keyword>
<keyword id="KW-1185">Reference proteome</keyword>
<keyword id="KW-0964">Secreted</keyword>
<keyword id="KW-0732">Signal</keyword>
<keyword id="KW-0808">Transferase</keyword>